<dbReference type="EMBL" id="M97934">
    <property type="status" value="NOT_ANNOTATED_CDS"/>
    <property type="molecule type" value="mRNA"/>
</dbReference>
<dbReference type="EMBL" id="U18671">
    <property type="protein sequence ID" value="AAA98760.1"/>
    <property type="molecule type" value="Genomic_DNA"/>
</dbReference>
<dbReference type="EMBL" id="S81491">
    <property type="protein sequence ID" value="AAB36226.1"/>
    <property type="status" value="ALT_SEQ"/>
    <property type="molecule type" value="Genomic_DNA"/>
</dbReference>
<dbReference type="EMBL" id="S81491">
    <property type="protein sequence ID" value="AAB36227.1"/>
    <property type="status" value="ALT_SEQ"/>
    <property type="molecule type" value="Genomic_DNA"/>
</dbReference>
<dbReference type="EMBL" id="AY525126">
    <property type="protein sequence ID" value="AAS00091.1"/>
    <property type="molecule type" value="Genomic_DNA"/>
</dbReference>
<dbReference type="EMBL" id="AK296939">
    <property type="protein sequence ID" value="BAG59489.1"/>
    <property type="molecule type" value="mRNA"/>
</dbReference>
<dbReference type="EMBL" id="AC025574">
    <property type="status" value="NOT_ANNOTATED_CDS"/>
    <property type="molecule type" value="Genomic_DNA"/>
</dbReference>
<dbReference type="EMBL" id="BC051284">
    <property type="protein sequence ID" value="AAH51284.1"/>
    <property type="molecule type" value="mRNA"/>
</dbReference>
<dbReference type="CCDS" id="CCDS55836.1">
    <molecule id="P52630-4"/>
</dbReference>
<dbReference type="CCDS" id="CCDS8917.1">
    <molecule id="P52630-3"/>
</dbReference>
<dbReference type="PIR" id="A46160">
    <property type="entry name" value="A46160"/>
</dbReference>
<dbReference type="RefSeq" id="NP_005410.1">
    <molecule id="P52630-3"/>
    <property type="nucleotide sequence ID" value="NM_005419.4"/>
</dbReference>
<dbReference type="RefSeq" id="NP_938146.1">
    <molecule id="P52630-4"/>
    <property type="nucleotide sequence ID" value="NM_198332.2"/>
</dbReference>
<dbReference type="PDB" id="2KA4">
    <property type="method" value="NMR"/>
    <property type="chains" value="B=786-838"/>
</dbReference>
<dbReference type="PDB" id="6UX2">
    <property type="method" value="X-ray"/>
    <property type="resolution" value="3.01 A"/>
    <property type="chains" value="A=1-713"/>
</dbReference>
<dbReference type="PDB" id="6WCZ">
    <property type="method" value="EM"/>
    <property type="resolution" value="4.00 A"/>
    <property type="chains" value="A=1-851"/>
</dbReference>
<dbReference type="PDB" id="8T12">
    <property type="method" value="EM"/>
    <property type="resolution" value="3.34 A"/>
    <property type="chains" value="A=1-851"/>
</dbReference>
<dbReference type="PDB" id="8T13">
    <property type="method" value="EM"/>
    <property type="resolution" value="3.45 A"/>
    <property type="chains" value="A=1-851"/>
</dbReference>
<dbReference type="PDBsum" id="2KA4"/>
<dbReference type="PDBsum" id="6UX2"/>
<dbReference type="PDBsum" id="6WCZ"/>
<dbReference type="PDBsum" id="8T12"/>
<dbReference type="PDBsum" id="8T13"/>
<dbReference type="EMDB" id="EMD-21618"/>
<dbReference type="EMDB" id="EMD-40952"/>
<dbReference type="EMDB" id="EMD-40953"/>
<dbReference type="SMR" id="P52630"/>
<dbReference type="BioGRID" id="112650">
    <property type="interactions" value="84"/>
</dbReference>
<dbReference type="ComplexPortal" id="CPX-6016">
    <property type="entry name" value="ISGF3 complex"/>
</dbReference>
<dbReference type="ComplexPortal" id="CPX-6047">
    <property type="entry name" value="STAT2/STAT6 complex"/>
</dbReference>
<dbReference type="CORUM" id="P52630"/>
<dbReference type="DIP" id="DIP-38511N"/>
<dbReference type="FunCoup" id="P52630">
    <property type="interactions" value="1617"/>
</dbReference>
<dbReference type="IntAct" id="P52630">
    <property type="interactions" value="96"/>
</dbReference>
<dbReference type="MINT" id="P52630"/>
<dbReference type="STRING" id="9606.ENSP00000315768"/>
<dbReference type="BindingDB" id="P52630"/>
<dbReference type="ChEMBL" id="CHEMBL4523239"/>
<dbReference type="GlyCosmos" id="P52630">
    <property type="glycosylation" value="2 sites, 1 glycan"/>
</dbReference>
<dbReference type="GlyGen" id="P52630">
    <property type="glycosylation" value="2 sites, 1 O-linked glycan (2 sites)"/>
</dbReference>
<dbReference type="iPTMnet" id="P52630"/>
<dbReference type="MetOSite" id="P52630"/>
<dbReference type="PhosphoSitePlus" id="P52630"/>
<dbReference type="BioMuta" id="STAT2"/>
<dbReference type="DMDM" id="1711552"/>
<dbReference type="CPTAC" id="CPTAC-1273"/>
<dbReference type="CPTAC" id="CPTAC-1274"/>
<dbReference type="jPOST" id="P52630"/>
<dbReference type="MassIVE" id="P52630"/>
<dbReference type="PaxDb" id="9606-ENSP00000315768"/>
<dbReference type="PeptideAtlas" id="P52630"/>
<dbReference type="ProteomicsDB" id="32682"/>
<dbReference type="ProteomicsDB" id="56498">
    <molecule id="P52630-3"/>
</dbReference>
<dbReference type="Pumba" id="P52630"/>
<dbReference type="ABCD" id="P52630">
    <property type="antibodies" value="3 sequenced antibodies"/>
</dbReference>
<dbReference type="Antibodypedia" id="3552">
    <property type="antibodies" value="1038 antibodies from 46 providers"/>
</dbReference>
<dbReference type="DNASU" id="6773"/>
<dbReference type="Ensembl" id="ENST00000314128.9">
    <molecule id="P52630-3"/>
    <property type="protein sequence ID" value="ENSP00000315768.4"/>
    <property type="gene ID" value="ENSG00000170581.15"/>
</dbReference>
<dbReference type="Ensembl" id="ENST00000557235.5">
    <molecule id="P52630-4"/>
    <property type="protein sequence ID" value="ENSP00000450751.1"/>
    <property type="gene ID" value="ENSG00000170581.15"/>
</dbReference>
<dbReference type="Ensembl" id="ENST00000698192.1">
    <molecule id="P52630-3"/>
    <property type="protein sequence ID" value="ENSP00000513599.1"/>
    <property type="gene ID" value="ENSG00000170581.15"/>
</dbReference>
<dbReference type="GeneID" id="6773"/>
<dbReference type="KEGG" id="hsa:6773"/>
<dbReference type="MANE-Select" id="ENST00000314128.9">
    <property type="protein sequence ID" value="ENSP00000315768.4"/>
    <property type="RefSeq nucleotide sequence ID" value="NM_005419.4"/>
    <property type="RefSeq protein sequence ID" value="NP_005410.1"/>
</dbReference>
<dbReference type="UCSC" id="uc001sld.4">
    <molecule id="P52630-3"/>
    <property type="organism name" value="human"/>
</dbReference>
<dbReference type="AGR" id="HGNC:11363"/>
<dbReference type="CTD" id="6773"/>
<dbReference type="DisGeNET" id="6773"/>
<dbReference type="GeneCards" id="STAT2"/>
<dbReference type="HGNC" id="HGNC:11363">
    <property type="gene designation" value="STAT2"/>
</dbReference>
<dbReference type="HPA" id="ENSG00000170581">
    <property type="expression patterns" value="Low tissue specificity"/>
</dbReference>
<dbReference type="MalaCards" id="STAT2"/>
<dbReference type="MIM" id="600556">
    <property type="type" value="gene"/>
</dbReference>
<dbReference type="MIM" id="616636">
    <property type="type" value="phenotype"/>
</dbReference>
<dbReference type="MIM" id="618886">
    <property type="type" value="phenotype"/>
</dbReference>
<dbReference type="neXtProt" id="NX_P52630"/>
<dbReference type="OpenTargets" id="ENSG00000170581"/>
<dbReference type="Orphanet" id="431166">
    <property type="disease" value="Primary immunodeficiency with post-measles-mumps-rubella vaccine viral infection"/>
</dbReference>
<dbReference type="PharmGKB" id="PA36184"/>
<dbReference type="VEuPathDB" id="HostDB:ENSG00000170581"/>
<dbReference type="eggNOG" id="KOG3667">
    <property type="taxonomic scope" value="Eukaryota"/>
</dbReference>
<dbReference type="GeneTree" id="ENSGT01050000244905"/>
<dbReference type="HOGENOM" id="CLU_014189_0_0_1"/>
<dbReference type="InParanoid" id="P52630"/>
<dbReference type="OMA" id="TMDEAYI"/>
<dbReference type="OrthoDB" id="19300at2759"/>
<dbReference type="PAN-GO" id="P52630">
    <property type="GO annotations" value="8 GO annotations based on evolutionary models"/>
</dbReference>
<dbReference type="PhylomeDB" id="P52630"/>
<dbReference type="TreeFam" id="TF318648"/>
<dbReference type="PathwayCommons" id="P52630"/>
<dbReference type="Reactome" id="R-HSA-8854691">
    <property type="pathway name" value="Interleukin-20 family signaling"/>
</dbReference>
<dbReference type="Reactome" id="R-HSA-909733">
    <property type="pathway name" value="Interferon alpha/beta signaling"/>
</dbReference>
<dbReference type="Reactome" id="R-HSA-912694">
    <property type="pathway name" value="Regulation of IFNA/IFNB signaling"/>
</dbReference>
<dbReference type="Reactome" id="R-HSA-9679191">
    <property type="pathway name" value="Potential therapeutics for SARS"/>
</dbReference>
<dbReference type="Reactome" id="R-HSA-9705671">
    <property type="pathway name" value="SARS-CoV-2 activates/modulates innate and adaptive immune responses"/>
</dbReference>
<dbReference type="Reactome" id="R-HSA-9833109">
    <property type="pathway name" value="Evasion by RSV of host interferon responses"/>
</dbReference>
<dbReference type="SignaLink" id="P52630"/>
<dbReference type="SIGNOR" id="P52630"/>
<dbReference type="BioGRID-ORCS" id="6773">
    <property type="hits" value="18 hits in 1182 CRISPR screens"/>
</dbReference>
<dbReference type="ChiTaRS" id="STAT2">
    <property type="organism name" value="human"/>
</dbReference>
<dbReference type="EvolutionaryTrace" id="P52630"/>
<dbReference type="GeneWiki" id="STAT2"/>
<dbReference type="GenomeRNAi" id="6773"/>
<dbReference type="Pharos" id="P52630">
    <property type="development level" value="Tbio"/>
</dbReference>
<dbReference type="PRO" id="PR:P52630"/>
<dbReference type="Proteomes" id="UP000005640">
    <property type="component" value="Chromosome 12"/>
</dbReference>
<dbReference type="RNAct" id="P52630">
    <property type="molecule type" value="protein"/>
</dbReference>
<dbReference type="Bgee" id="ENSG00000170581">
    <property type="expression patterns" value="Expressed in granulocyte and 184 other cell types or tissues"/>
</dbReference>
<dbReference type="ExpressionAtlas" id="P52630">
    <property type="expression patterns" value="baseline and differential"/>
</dbReference>
<dbReference type="GO" id="GO:0000785">
    <property type="term" value="C:chromatin"/>
    <property type="evidence" value="ECO:0000247"/>
    <property type="project" value="NTNU_SB"/>
</dbReference>
<dbReference type="GO" id="GO:0005737">
    <property type="term" value="C:cytoplasm"/>
    <property type="evidence" value="ECO:0000318"/>
    <property type="project" value="GO_Central"/>
</dbReference>
<dbReference type="GO" id="GO:0005829">
    <property type="term" value="C:cytosol"/>
    <property type="evidence" value="ECO:0000314"/>
    <property type="project" value="HPA"/>
</dbReference>
<dbReference type="GO" id="GO:0070721">
    <property type="term" value="C:ISGF3 complex"/>
    <property type="evidence" value="ECO:0000353"/>
    <property type="project" value="ComplexPortal"/>
</dbReference>
<dbReference type="GO" id="GO:0005654">
    <property type="term" value="C:nucleoplasm"/>
    <property type="evidence" value="ECO:0000304"/>
    <property type="project" value="Reactome"/>
</dbReference>
<dbReference type="GO" id="GO:0005634">
    <property type="term" value="C:nucleus"/>
    <property type="evidence" value="ECO:0000314"/>
    <property type="project" value="UniProt"/>
</dbReference>
<dbReference type="GO" id="GO:0005886">
    <property type="term" value="C:plasma membrane"/>
    <property type="evidence" value="ECO:0000314"/>
    <property type="project" value="HPA"/>
</dbReference>
<dbReference type="GO" id="GO:0090575">
    <property type="term" value="C:RNA polymerase II transcription regulator complex"/>
    <property type="evidence" value="ECO:0000303"/>
    <property type="project" value="ComplexPortal"/>
</dbReference>
<dbReference type="GO" id="GO:0003700">
    <property type="term" value="F:DNA-binding transcription factor activity"/>
    <property type="evidence" value="ECO:0000314"/>
    <property type="project" value="UniProt"/>
</dbReference>
<dbReference type="GO" id="GO:0000981">
    <property type="term" value="F:DNA-binding transcription factor activity, RNA polymerase II-specific"/>
    <property type="evidence" value="ECO:0000314"/>
    <property type="project" value="UniProt"/>
</dbReference>
<dbReference type="GO" id="GO:0042802">
    <property type="term" value="F:identical protein binding"/>
    <property type="evidence" value="ECO:0000353"/>
    <property type="project" value="IntAct"/>
</dbReference>
<dbReference type="GO" id="GO:0000978">
    <property type="term" value="F:RNA polymerase II cis-regulatory region sequence-specific DNA binding"/>
    <property type="evidence" value="ECO:0000318"/>
    <property type="project" value="GO_Central"/>
</dbReference>
<dbReference type="GO" id="GO:0044389">
    <property type="term" value="F:ubiquitin-like protein ligase binding"/>
    <property type="evidence" value="ECO:0000353"/>
    <property type="project" value="UniProtKB"/>
</dbReference>
<dbReference type="GO" id="GO:0007259">
    <property type="term" value="P:cell surface receptor signaling pathway via JAK-STAT"/>
    <property type="evidence" value="ECO:0000314"/>
    <property type="project" value="UniProt"/>
</dbReference>
<dbReference type="GO" id="GO:0006952">
    <property type="term" value="P:defense response"/>
    <property type="evidence" value="ECO:0000318"/>
    <property type="project" value="GO_Central"/>
</dbReference>
<dbReference type="GO" id="GO:0051607">
    <property type="term" value="P:defense response to virus"/>
    <property type="evidence" value="ECO:0000315"/>
    <property type="project" value="UniProtKB"/>
</dbReference>
<dbReference type="GO" id="GO:0060339">
    <property type="term" value="P:negative regulation of type I interferon-mediated signaling pathway"/>
    <property type="evidence" value="ECO:0000315"/>
    <property type="project" value="UniProtKB"/>
</dbReference>
<dbReference type="GO" id="GO:0045944">
    <property type="term" value="P:positive regulation of transcription by RNA polymerase II"/>
    <property type="evidence" value="ECO:0000314"/>
    <property type="project" value="ComplexPortal"/>
</dbReference>
<dbReference type="GO" id="GO:0042127">
    <property type="term" value="P:regulation of cell population proliferation"/>
    <property type="evidence" value="ECO:0000318"/>
    <property type="project" value="GO_Central"/>
</dbReference>
<dbReference type="GO" id="GO:0090140">
    <property type="term" value="P:regulation of mitochondrial fission"/>
    <property type="evidence" value="ECO:0000315"/>
    <property type="project" value="UniProtKB"/>
</dbReference>
<dbReference type="GO" id="GO:0001932">
    <property type="term" value="P:regulation of protein phosphorylation"/>
    <property type="evidence" value="ECO:0000315"/>
    <property type="project" value="UniProtKB"/>
</dbReference>
<dbReference type="GO" id="GO:0006357">
    <property type="term" value="P:regulation of transcription by RNA polymerase II"/>
    <property type="evidence" value="ECO:0000314"/>
    <property type="project" value="UniProt"/>
</dbReference>
<dbReference type="GO" id="GO:0043434">
    <property type="term" value="P:response to peptide hormone"/>
    <property type="evidence" value="ECO:0000318"/>
    <property type="project" value="GO_Central"/>
</dbReference>
<dbReference type="GO" id="GO:0060337">
    <property type="term" value="P:type I interferon-mediated signaling pathway"/>
    <property type="evidence" value="ECO:0000315"/>
    <property type="project" value="UniProtKB"/>
</dbReference>
<dbReference type="CDD" id="cd10373">
    <property type="entry name" value="SH2_STAT2"/>
    <property type="match status" value="1"/>
</dbReference>
<dbReference type="CDD" id="cd16852">
    <property type="entry name" value="STAT2_CCD"/>
    <property type="match status" value="1"/>
</dbReference>
<dbReference type="DisProt" id="DP00961"/>
<dbReference type="FunFam" id="1.10.238.10:FF:000012">
    <property type="entry name" value="Signal transducer and activator of transcription"/>
    <property type="match status" value="1"/>
</dbReference>
<dbReference type="FunFam" id="1.10.532.10:FF:000003">
    <property type="entry name" value="Signal transducer and activator of transcription"/>
    <property type="match status" value="1"/>
</dbReference>
<dbReference type="FunFam" id="1.20.1050.20:FF:000001">
    <property type="entry name" value="Signal transducer and activator of transcription"/>
    <property type="match status" value="1"/>
</dbReference>
<dbReference type="FunFam" id="2.60.40.630:FF:000004">
    <property type="entry name" value="Signal transducer and activator of transcription"/>
    <property type="match status" value="1"/>
</dbReference>
<dbReference type="FunFam" id="3.30.505.10:FF:000003">
    <property type="entry name" value="Signal transducer and activator of transcription"/>
    <property type="match status" value="1"/>
</dbReference>
<dbReference type="Gene3D" id="1.10.238.10">
    <property type="entry name" value="EF-hand"/>
    <property type="match status" value="1"/>
</dbReference>
<dbReference type="Gene3D" id="3.30.505.10">
    <property type="entry name" value="SH2 domain"/>
    <property type="match status" value="1"/>
</dbReference>
<dbReference type="Gene3D" id="1.20.1050.20">
    <property type="entry name" value="STAT transcription factor, all-alpha domain"/>
    <property type="match status" value="1"/>
</dbReference>
<dbReference type="Gene3D" id="2.60.40.630">
    <property type="entry name" value="STAT transcription factor, DNA-binding domain"/>
    <property type="match status" value="1"/>
</dbReference>
<dbReference type="Gene3D" id="1.10.532.10">
    <property type="entry name" value="STAT transcription factor, N-terminal domain"/>
    <property type="match status" value="1"/>
</dbReference>
<dbReference type="IDEAL" id="IID00053"/>
<dbReference type="InterPro" id="IPR008967">
    <property type="entry name" value="p53-like_TF_DNA-bd_sf"/>
</dbReference>
<dbReference type="InterPro" id="IPR000980">
    <property type="entry name" value="SH2"/>
</dbReference>
<dbReference type="InterPro" id="IPR036860">
    <property type="entry name" value="SH2_dom_sf"/>
</dbReference>
<dbReference type="InterPro" id="IPR001217">
    <property type="entry name" value="STAT"/>
</dbReference>
<dbReference type="InterPro" id="IPR022756">
    <property type="entry name" value="STAT2_C"/>
</dbReference>
<dbReference type="InterPro" id="IPR035854">
    <property type="entry name" value="STAT2_SH2"/>
</dbReference>
<dbReference type="InterPro" id="IPR048988">
    <property type="entry name" value="STAT_linker"/>
</dbReference>
<dbReference type="InterPro" id="IPR036535">
    <property type="entry name" value="STAT_N_sf"/>
</dbReference>
<dbReference type="InterPro" id="IPR013800">
    <property type="entry name" value="STAT_TF_alpha"/>
</dbReference>
<dbReference type="InterPro" id="IPR015988">
    <property type="entry name" value="STAT_TF_coiled-coil"/>
</dbReference>
<dbReference type="InterPro" id="IPR013801">
    <property type="entry name" value="STAT_TF_DNA-bd"/>
</dbReference>
<dbReference type="InterPro" id="IPR012345">
    <property type="entry name" value="STAT_TF_DNA-bd_N"/>
</dbReference>
<dbReference type="InterPro" id="IPR013799">
    <property type="entry name" value="STAT_TF_prot_interaction"/>
</dbReference>
<dbReference type="PANTHER" id="PTHR11801">
    <property type="entry name" value="SIGNAL TRANSDUCER AND ACTIVATOR OF TRANSCRIPTION"/>
    <property type="match status" value="1"/>
</dbReference>
<dbReference type="Pfam" id="PF00017">
    <property type="entry name" value="SH2"/>
    <property type="match status" value="1"/>
</dbReference>
<dbReference type="Pfam" id="PF12188">
    <property type="entry name" value="STAT2_C"/>
    <property type="match status" value="1"/>
</dbReference>
<dbReference type="Pfam" id="PF01017">
    <property type="entry name" value="STAT_alpha"/>
    <property type="match status" value="1"/>
</dbReference>
<dbReference type="Pfam" id="PF02864">
    <property type="entry name" value="STAT_bind"/>
    <property type="match status" value="1"/>
</dbReference>
<dbReference type="Pfam" id="PF02865">
    <property type="entry name" value="STAT_int"/>
    <property type="match status" value="1"/>
</dbReference>
<dbReference type="Pfam" id="PF21354">
    <property type="entry name" value="STAT_linker"/>
    <property type="match status" value="1"/>
</dbReference>
<dbReference type="SMART" id="SM00252">
    <property type="entry name" value="SH2"/>
    <property type="match status" value="1"/>
</dbReference>
<dbReference type="SMART" id="SM00964">
    <property type="entry name" value="STAT_int"/>
    <property type="match status" value="1"/>
</dbReference>
<dbReference type="SUPFAM" id="SSF49417">
    <property type="entry name" value="p53-like transcription factors"/>
    <property type="match status" value="1"/>
</dbReference>
<dbReference type="SUPFAM" id="SSF55550">
    <property type="entry name" value="SH2 domain"/>
    <property type="match status" value="1"/>
</dbReference>
<dbReference type="SUPFAM" id="SSF47655">
    <property type="entry name" value="STAT"/>
    <property type="match status" value="1"/>
</dbReference>
<dbReference type="SUPFAM" id="SSF48092">
    <property type="entry name" value="Transcription factor STAT-4 N-domain"/>
    <property type="match status" value="1"/>
</dbReference>
<dbReference type="PROSITE" id="PS50001">
    <property type="entry name" value="SH2"/>
    <property type="match status" value="1"/>
</dbReference>
<feature type="chain" id="PRO_0000182413" description="Signal transducer and activator of transcription 2">
    <location>
        <begin position="1"/>
        <end position="851"/>
    </location>
</feature>
<feature type="domain" description="SH2" evidence="2">
    <location>
        <begin position="572"/>
        <end position="667"/>
    </location>
</feature>
<feature type="region of interest" description="Mediates interaction with USP18" evidence="21">
    <location>
        <begin position="138"/>
        <end position="572"/>
    </location>
</feature>
<feature type="region of interest" description="Interaction with heartland virus NSs" evidence="24">
    <location>
        <begin position="316"/>
        <end position="575"/>
    </location>
</feature>
<feature type="region of interest" description="Interaction with SFTSV virus NSs" evidence="16">
    <location>
        <begin position="316"/>
        <end position="486"/>
    </location>
</feature>
<feature type="modified residue" description="Phosphoserine" evidence="14">
    <location>
        <position position="283"/>
    </location>
</feature>
<feature type="modified residue" description="Phosphoserine" evidence="14">
    <location>
        <position position="287"/>
    </location>
</feature>
<feature type="modified residue" description="Phosphothreonine" evidence="14">
    <location>
        <position position="294"/>
    </location>
</feature>
<feature type="modified residue" description="Phosphotyrosine; by JAK" evidence="30 32">
    <location>
        <position position="690"/>
    </location>
</feature>
<feature type="modified residue" description="Phosphoserine" evidence="37">
    <location>
        <position position="753"/>
    </location>
</feature>
<feature type="modified residue" description="Phosphothreonine" evidence="36 37">
    <location>
        <position position="800"/>
    </location>
</feature>
<feature type="splice variant" id="VSP_046705" description="In isoform 2." evidence="34">
    <location>
        <begin position="96"/>
        <end position="99"/>
    </location>
</feature>
<feature type="sequence variant" id="VAR_014896" description="In dbSNP:rs2066816.">
    <original>Q</original>
    <variation>H</variation>
    <location>
        <position position="66"/>
    </location>
</feature>
<feature type="sequence variant" id="VAR_084450" description="In PTORCH3; increased cellular sensitivity to type I IFNs; fails to appropriately traffic USP18 thereby preventing USP18 to inhibit responses to IFN-I." evidence="26">
    <original>R</original>
    <variation>Q</variation>
    <location>
        <position position="148"/>
    </location>
</feature>
<feature type="sequence variant" id="VAR_084451" description="In PTORCH3; increased cellular sensitivity to type I IFNs; loss of interaction with USP18 thereby preventing USP18 to inhibit responses to IFN-I; dbSNP:rs1458224681." evidence="25">
    <original>R</original>
    <variation>W</variation>
    <location>
        <position position="148"/>
    </location>
</feature>
<feature type="sequence variant" id="VAR_014897" description="In dbSNP:rs2066817.">
    <original>L</original>
    <variation>P</variation>
    <location>
        <position position="220"/>
    </location>
</feature>
<feature type="sequence variant" id="VAR_052072" description="In dbSNP:rs2228259.">
    <original>C</original>
    <variation>S</variation>
    <location>
        <position position="246"/>
    </location>
</feature>
<feature type="sequence variant" id="VAR_014898" description="In dbSNP:rs2066815." evidence="33">
    <original>T</original>
    <variation>M</variation>
    <location>
        <position position="448"/>
    </location>
</feature>
<feature type="sequence variant" id="VAR_014899" description="In dbSNP:rs2066811." evidence="33">
    <original>I</original>
    <variation>V</variation>
    <location>
        <position position="464"/>
    </location>
</feature>
<feature type="sequence variant" id="VAR_014900" description="In dbSNP:rs2066809.">
    <original>S</original>
    <variation>I</variation>
    <location>
        <position position="501"/>
    </location>
</feature>
<feature type="sequence variant" id="VAR_014901" description="In dbSNP:rs2066807." evidence="33">
    <original>M</original>
    <variation>I</variation>
    <location>
        <position position="594"/>
    </location>
</feature>
<feature type="sequence variant" id="VAR_019213" description="In dbSNP:rs2229363." evidence="33">
    <original>Q</original>
    <variation>H</variation>
    <location>
        <position position="826"/>
    </location>
</feature>
<feature type="mutagenesis site" description="Prevents the nuclear import; when associated with A-375." evidence="3">
    <original>R</original>
    <variation>A</variation>
    <location>
        <position position="374"/>
    </location>
</feature>
<feature type="mutagenesis site" description="Prevents the nuclear import; when associated with A-374." evidence="3">
    <original>K</original>
    <variation>A</variation>
    <location>
        <position position="375"/>
    </location>
</feature>
<feature type="mutagenesis site" description="Prevents the nuclear import; when associated with A-415." evidence="3">
    <original>R</original>
    <variation>A</variation>
    <location>
        <position position="409"/>
    </location>
</feature>
<feature type="mutagenesis site" description="Prevents the nuclear import; when associated with A-409." evidence="3">
    <original>K</original>
    <variation>A</variation>
    <location>
        <position position="415"/>
    </location>
</feature>
<feature type="mutagenesis site" description="Reduces phosphorylation of STAT1 in response to IFN-ALPHA." evidence="30">
    <original>Y</original>
    <variation>F</variation>
    <location>
        <position position="690"/>
    </location>
</feature>
<feature type="sequence conflict" description="In Ref. 4; BAG59489." evidence="35" ref="4">
    <original>A</original>
    <variation>T</variation>
    <location>
        <position position="240"/>
    </location>
</feature>
<feature type="helix" evidence="40">
    <location>
        <begin position="5"/>
        <end position="10"/>
    </location>
</feature>
<feature type="helix" evidence="40">
    <location>
        <begin position="12"/>
        <end position="24"/>
    </location>
</feature>
<feature type="strand" evidence="40">
    <location>
        <begin position="25"/>
        <end position="27"/>
    </location>
</feature>
<feature type="turn" evidence="39">
    <location>
        <begin position="32"/>
        <end position="35"/>
    </location>
</feature>
<feature type="helix" evidence="39">
    <location>
        <begin position="36"/>
        <end position="41"/>
    </location>
</feature>
<feature type="helix" evidence="39">
    <location>
        <begin position="44"/>
        <end position="47"/>
    </location>
</feature>
<feature type="helix" evidence="39">
    <location>
        <begin position="54"/>
        <end position="67"/>
    </location>
</feature>
<feature type="helix" evidence="39">
    <location>
        <begin position="80"/>
        <end position="82"/>
    </location>
</feature>
<feature type="helix" evidence="39">
    <location>
        <begin position="83"/>
        <end position="93"/>
    </location>
</feature>
<feature type="helix" evidence="39">
    <location>
        <begin position="96"/>
        <end position="98"/>
    </location>
</feature>
<feature type="helix" evidence="39">
    <location>
        <begin position="101"/>
        <end position="110"/>
    </location>
</feature>
<feature type="helix" evidence="39">
    <location>
        <begin position="141"/>
        <end position="182"/>
    </location>
</feature>
<feature type="helix" evidence="39">
    <location>
        <begin position="194"/>
        <end position="246"/>
    </location>
</feature>
<feature type="helix" evidence="39">
    <location>
        <begin position="256"/>
        <end position="284"/>
    </location>
</feature>
<feature type="helix" evidence="39">
    <location>
        <begin position="293"/>
        <end position="315"/>
    </location>
</feature>
<feature type="strand" evidence="39">
    <location>
        <begin position="316"/>
        <end position="323"/>
    </location>
</feature>
<feature type="strand" evidence="39">
    <location>
        <begin position="332"/>
        <end position="335"/>
    </location>
</feature>
<feature type="strand" evidence="39">
    <location>
        <begin position="340"/>
        <end position="348"/>
    </location>
</feature>
<feature type="strand" evidence="40">
    <location>
        <begin position="353"/>
        <end position="355"/>
    </location>
</feature>
<feature type="strand" evidence="39">
    <location>
        <begin position="357"/>
        <end position="363"/>
    </location>
</feature>
<feature type="strand" evidence="40">
    <location>
        <begin position="369"/>
        <end position="371"/>
    </location>
</feature>
<feature type="strand" evidence="39">
    <location>
        <begin position="376"/>
        <end position="380"/>
    </location>
</feature>
<feature type="strand" evidence="39">
    <location>
        <begin position="383"/>
        <end position="386"/>
    </location>
</feature>
<feature type="helix" evidence="39">
    <location>
        <begin position="388"/>
        <end position="394"/>
    </location>
</feature>
<feature type="strand" evidence="39">
    <location>
        <begin position="396"/>
        <end position="407"/>
    </location>
</feature>
<feature type="helix" evidence="39">
    <location>
        <begin position="424"/>
        <end position="426"/>
    </location>
</feature>
<feature type="strand" evidence="39">
    <location>
        <begin position="431"/>
        <end position="439"/>
    </location>
</feature>
<feature type="strand" evidence="39">
    <location>
        <begin position="442"/>
        <end position="449"/>
    </location>
</feature>
<feature type="strand" evidence="39">
    <location>
        <begin position="453"/>
        <end position="458"/>
    </location>
</feature>
<feature type="helix" evidence="39">
    <location>
        <begin position="459"/>
        <end position="461"/>
    </location>
</feature>
<feature type="helix" evidence="39">
    <location>
        <begin position="462"/>
        <end position="475"/>
    </location>
</feature>
<feature type="helix" evidence="39">
    <location>
        <begin position="493"/>
        <end position="507"/>
    </location>
</feature>
<feature type="helix" evidence="39">
    <location>
        <begin position="514"/>
        <end position="525"/>
    </location>
</feature>
<feature type="strand" evidence="39">
    <location>
        <begin position="531"/>
        <end position="533"/>
    </location>
</feature>
<feature type="helix" evidence="39">
    <location>
        <begin position="538"/>
        <end position="542"/>
    </location>
</feature>
<feature type="strand" evidence="39">
    <location>
        <begin position="544"/>
        <end position="546"/>
    </location>
</feature>
<feature type="turn" evidence="39">
    <location>
        <begin position="547"/>
        <end position="550"/>
    </location>
</feature>
<feature type="helix" evidence="39">
    <location>
        <begin position="553"/>
        <end position="567"/>
    </location>
</feature>
<feature type="helix" evidence="39">
    <location>
        <begin position="569"/>
        <end position="573"/>
    </location>
</feature>
<feature type="helix" evidence="39">
    <location>
        <begin position="583"/>
        <end position="591"/>
    </location>
</feature>
<feature type="strand" evidence="39">
    <location>
        <begin position="597"/>
        <end position="602"/>
    </location>
</feature>
<feature type="strand" evidence="39">
    <location>
        <begin position="604"/>
        <end position="606"/>
    </location>
</feature>
<feature type="strand" evidence="39">
    <location>
        <begin position="610"/>
        <end position="616"/>
    </location>
</feature>
<feature type="strand" evidence="39">
    <location>
        <begin position="619"/>
        <end position="628"/>
    </location>
</feature>
<feature type="helix" evidence="39">
    <location>
        <begin position="633"/>
        <end position="636"/>
    </location>
</feature>
<feature type="helix" evidence="39">
    <location>
        <begin position="641"/>
        <end position="646"/>
    </location>
</feature>
<feature type="turn" evidence="39">
    <location>
        <begin position="665"/>
        <end position="667"/>
    </location>
</feature>
<feature type="helix" evidence="39">
    <location>
        <begin position="670"/>
        <end position="673"/>
    </location>
</feature>
<feature type="helix" evidence="39">
    <location>
        <begin position="675"/>
        <end position="677"/>
    </location>
</feature>
<feature type="strand" evidence="39">
    <location>
        <begin position="693"/>
        <end position="699"/>
    </location>
</feature>
<feature type="helix" evidence="39">
    <location>
        <begin position="700"/>
        <end position="704"/>
    </location>
</feature>
<feature type="helix" evidence="38">
    <location>
        <begin position="793"/>
        <end position="796"/>
    </location>
</feature>
<feature type="helix" evidence="38">
    <location>
        <begin position="802"/>
        <end position="806"/>
    </location>
</feature>
<feature type="turn" evidence="38">
    <location>
        <begin position="812"/>
        <end position="814"/>
    </location>
</feature>
<feature type="helix" evidence="38">
    <location>
        <begin position="824"/>
        <end position="827"/>
    </location>
</feature>
<feature type="helix" evidence="38">
    <location>
        <begin position="831"/>
        <end position="834"/>
    </location>
</feature>
<organism>
    <name type="scientific">Homo sapiens</name>
    <name type="common">Human</name>
    <dbReference type="NCBI Taxonomy" id="9606"/>
    <lineage>
        <taxon>Eukaryota</taxon>
        <taxon>Metazoa</taxon>
        <taxon>Chordata</taxon>
        <taxon>Craniata</taxon>
        <taxon>Vertebrata</taxon>
        <taxon>Euteleostomi</taxon>
        <taxon>Mammalia</taxon>
        <taxon>Eutheria</taxon>
        <taxon>Euarchontoglires</taxon>
        <taxon>Primates</taxon>
        <taxon>Haplorrhini</taxon>
        <taxon>Catarrhini</taxon>
        <taxon>Hominidae</taxon>
        <taxon>Homo</taxon>
    </lineage>
</organism>
<accession>P52630</accession>
<accession>B4DLC7</accession>
<accession>G3V2M6</accession>
<accession>Q16430</accession>
<accession>Q16431</accession>
<accession>Q9UDL4</accession>
<gene>
    <name type="primary">STAT2</name>
</gene>
<name>STAT2_HUMAN</name>
<comment type="function">
    <text evidence="15 17 21 25 26 31">Signal transducer and activator of transcription that mediates signaling by type I interferons (IFN-alpha and IFN-beta). Following type I IFN binding to cell surface receptors, Jak kinases (TYK2 and JAK1) are activated, leading to tyrosine phosphorylation of STAT1 and STAT2. The phosphorylated STATs dimerize, associate with IRF9/ISGF3G to form a complex termed ISGF3 transcription factor, that enters the nucleus. ISGF3 binds to the IFN stimulated response element (ISRE) to activate the transcription of interferon stimulated genes, which drive the cell in an antiviral state (PubMed:23391734, PubMed:9020188). In addition, also has a negative feedback regulatory role in the type I interferon signaling by recruiting USP18 to the type I IFN receptor subunit IFNAR2 thereby mitigating the response to type I IFNs (PubMed:28165510). Acts as a regulator of mitochondrial fission by modulating the phosphorylation of DNM1L at 'Ser-616' and 'Ser-637' which activate and inactivate the GTPase activity of DNM1L respectively (PubMed:23391734, PubMed:26122121, PubMed:9020188).</text>
</comment>
<comment type="subunit">
    <text evidence="1 4 19 21 25 26 31 32">Heterodimer with STAT1 upon IFN-alpha/beta induced phosphorylation (By similarity). The heterodimer STAT1:STAT2 forms the interferon-stimulated gene factor 3 complex (ISGF3) with IRF9; interacts with IRF9 in the cytoplasm (By similarity). Interacts with CRSP2 and CRSP6 (PubMed:12509459). Can form a homodimer upon IFN-alpha induced phosphorylation (PubMed:9020188). Interacts with IFNAR1; the interaction requires the phosphorylation of IFNAR1 at 'Tyr-466' (PubMed:9121453). Interacts with IFNAR2; the interaction is direct (PubMed:28165510, PubMed:31836668, PubMed:32092142, PubMed:9121453). Interacts with ARL2BP (By similarity). Interacts with E3 ubiquitin ligase DCST1; the interaction results in STAT2 ubiquitin-mediated proteasomal degradation (PubMed:27782195). Interacts with USP18; the interaction is direct and allows the recruitment of USP18 to IFNAR2.</text>
</comment>
<comment type="subunit">
    <text evidence="13">(Microbial infection) Interacts with vaccinia virus protein C6.</text>
</comment>
<comment type="subunit">
    <text evidence="5">(Microbial infection) Interacts with Simian virus 5 protein V.</text>
</comment>
<comment type="subunit">
    <text evidence="5">(Microbial infection) Interacts with Rabies virus phosphoprotein.</text>
</comment>
<comment type="subunit">
    <text evidence="8">(Microbial infection) Interacts with Human cytomegalovirus/HHV-5 protein UL123; this interaction promotes viral growth.</text>
</comment>
<comment type="subunit">
    <text evidence="10 11">(Microbial infection) Interacts with Dengue virus NS5; this interaction inhibits the phosphorylation of STAT2, and, when all viral proteins are present (polyprotein), targets STAT2 for degradation.</text>
</comment>
<comment type="subunit">
    <text evidence="18 20">(Microbial infection) Interacts with Zika virus NS5; this interaction targets STAT2 for degradation.</text>
</comment>
<comment type="subunit">
    <text evidence="8 12">(Microbial infection) Interacts with human cytomegalovirus (HHV-5) immediate early protein IE1; this interaction promotes viral growth and counteracts the antiviral interferon response.</text>
</comment>
<comment type="subunit">
    <text evidence="24">(Microbial infection) Interacts with heartland virus NSs; this interaction blocks the nuclear translocation and activation of STAT2.</text>
</comment>
<comment type="subunit">
    <text evidence="16 22 23">(Microbial infection) Interacts with severe fever with thrombocytopenia syndrome virus (SFTSV) NSs; this interaction leads to STAT2 sequestration into viral inclusion bodies and inhibition of STAT2 phosphorylation thereby suppressing type I IFN-induced nuclear translocation of the transcription factor.</text>
</comment>
<comment type="subunit">
    <text evidence="29">(Microbial infection) Interacts with Epstein Barr virus (EBV) tegument protein BGLF2; this interaction leads to STAT2 degradation.</text>
</comment>
<comment type="subunit">
    <text evidence="7 9 27">(Microbial infection) Interacts with measles V protein; this interaction is involved in the inhibition of the host type I interferon signaling pathway.</text>
</comment>
<comment type="interaction">
    <interactant intactId="EBI-1546963">
        <id>P52630</id>
    </interactant>
    <interactant intactId="EBI-1547250">
        <id>P17181</id>
        <label>IFNAR1</label>
    </interactant>
    <organismsDiffer>false</organismsDiffer>
    <experiments>5</experiments>
</comment>
<comment type="interaction">
    <interactant intactId="EBI-1546963">
        <id>P52630</id>
    </interactant>
    <interactant intactId="EBI-958408">
        <id>P48551</id>
        <label>IFNAR2</label>
    </interactant>
    <organismsDiffer>false</organismsDiffer>
    <experiments>4</experiments>
</comment>
<comment type="interaction">
    <interactant intactId="EBI-1546963">
        <id>P52630</id>
    </interactant>
    <interactant intactId="EBI-626526">
        <id>Q00978</id>
        <label>IRF9</label>
    </interactant>
    <organismsDiffer>false</organismsDiffer>
    <experiments>10</experiments>
</comment>
<comment type="interaction">
    <interactant intactId="EBI-1546963">
        <id>P52630</id>
    </interactant>
    <interactant intactId="EBI-1057697">
        <id>P42224</id>
        <label>STAT1</label>
    </interactant>
    <organismsDiffer>false</organismsDiffer>
    <experiments>19</experiments>
</comment>
<comment type="interaction">
    <interactant intactId="EBI-1546963">
        <id>P52630</id>
    </interactant>
    <interactant intactId="EBI-1546963">
        <id>P52630</id>
        <label>STAT2</label>
    </interactant>
    <organismsDiffer>false</organismsDiffer>
    <experiments>3</experiments>
</comment>
<comment type="interaction">
    <interactant intactId="EBI-1546963">
        <id>P52630</id>
    </interactant>
    <interactant intactId="EBI-1383454">
        <id>P29597</id>
        <label>TYK2</label>
    </interactant>
    <organismsDiffer>false</organismsDiffer>
    <experiments>4</experiments>
</comment>
<comment type="interaction">
    <interactant intactId="EBI-1546963">
        <id>P52630</id>
    </interactant>
    <interactant intactId="EBI-25475856">
        <id>P0DTC9</id>
        <label>N</label>
    </interactant>
    <organismsDiffer>true</organismsDiffer>
    <experiments>7</experiments>
</comment>
<comment type="interaction">
    <interactant intactId="EBI-1546963">
        <id>P52630</id>
    </interactant>
    <interactant intactId="EBI-3650423">
        <id>P0C774</id>
        <label>P/V</label>
    </interactant>
    <organismsDiffer>true</organismsDiffer>
    <experiments>4</experiments>
</comment>
<comment type="interaction">
    <interactant intactId="EBI-1546963">
        <id>P52630</id>
    </interactant>
    <interactant intactId="EBI-6148694">
        <id>P11207</id>
        <label>P/V</label>
    </interactant>
    <organismsDiffer>true</organismsDiffer>
    <experiments>2</experiments>
</comment>
<comment type="interaction">
    <interactant intactId="EBI-1546963">
        <id>P52630</id>
    </interactant>
    <interactant intactId="EBI-15849356">
        <id>Q77PU6</id>
        <label>U90</label>
    </interactant>
    <organismsDiffer>true</organismsDiffer>
    <experiments>2</experiments>
</comment>
<comment type="subcellular location">
    <subcellularLocation>
        <location evidence="3 14 19">Cytoplasm</location>
    </subcellularLocation>
    <subcellularLocation>
        <location evidence="3 14">Nucleus</location>
    </subcellularLocation>
    <text evidence="3 14">Translocated into the nucleus upon activation by IFN-alpha/beta.</text>
</comment>
<comment type="alternative products">
    <event type="alternative splicing"/>
    <isoform>
        <id>P52630-3</id>
        <name>1</name>
        <sequence type="displayed"/>
    </isoform>
    <isoform>
        <id>P52630-4</id>
        <name>2</name>
        <sequence type="described" ref="VSP_046705"/>
    </isoform>
</comment>
<comment type="PTM">
    <text evidence="6 14 30 32">Tyrosine phosphorylated in response to IFN-alpha. Phosphorylation at Ser-287 negatively regulates the transcriptional response.</text>
</comment>
<comment type="PTM">
    <text evidence="19">'Lys-48'-linked ubiquitination by DCST1 leads to STAT2 proteasomal degradation.</text>
</comment>
<comment type="PTM">
    <text evidence="28">(Microbial infection) Ubiquitinated by Herpes simplex virus 2 E3 ubiquitin ligase ICP22.</text>
</comment>
<comment type="disease" evidence="15 17">
    <disease id="DI-04585">
        <name>Immunodeficiency 44</name>
        <acronym>IMD44</acronym>
        <description>An autosomal recessive disorder characterized by increased susceptibility to viral infection, resulting in some patients in encephalopathy and infection-associated neurologic decompensation.</description>
        <dbReference type="MIM" id="616636"/>
    </disease>
    <text>The disease is caused by variants affecting the gene represented in this entry.</text>
</comment>
<comment type="disease" evidence="25 26">
    <disease id="DI-05844">
        <name>Pseudo-TORCH syndrome 3</name>
        <acronym>PTORCH3</acronym>
        <description>An autosomal recessive disorder characterized by developmental delay with acute episodes of fever and multisystemic organ involvement, including coagulopathy, elevated liver enzymes, and proteinuria, often associated with thrombotic microangiopathy. Brain imaging shows progressive intracranial calcifications, white matter abnormalities, and sometimes cerebral or cerebellar atrophy. Disease onset is in the neonatal period, and death in early childhood is common.</description>
        <dbReference type="MIM" id="618886"/>
    </disease>
    <text>The disease is caused by variants affecting the gene represented in this entry.</text>
</comment>
<comment type="miscellaneous">
    <molecule>Isoform 2</molecule>
    <text evidence="35">May be due to competing acceptor splice site.</text>
</comment>
<comment type="similarity">
    <text evidence="35">Belongs to the transcription factor STAT family.</text>
</comment>
<comment type="sequence caution" evidence="35">
    <conflict type="erroneous gene model prediction">
        <sequence resource="EMBL-CDS" id="AAB36226"/>
    </conflict>
</comment>
<comment type="sequence caution" evidence="35">
    <conflict type="erroneous gene model prediction">
        <sequence resource="EMBL-CDS" id="AAB36227"/>
    </conflict>
</comment>
<protein>
    <recommendedName>
        <fullName>Signal transducer and activator of transcription 2</fullName>
    </recommendedName>
    <alternativeName>
        <fullName>p113</fullName>
    </alternativeName>
</protein>
<keyword id="KW-0002">3D-structure</keyword>
<keyword id="KW-0010">Activator</keyword>
<keyword id="KW-0025">Alternative splicing</keyword>
<keyword id="KW-0051">Antiviral defense</keyword>
<keyword id="KW-0963">Cytoplasm</keyword>
<keyword id="KW-0903">Direct protein sequencing</keyword>
<keyword id="KW-0225">Disease variant</keyword>
<keyword id="KW-0238">DNA-binding</keyword>
<keyword id="KW-0945">Host-virus interaction</keyword>
<keyword id="KW-0539">Nucleus</keyword>
<keyword id="KW-0597">Phosphoprotein</keyword>
<keyword id="KW-1267">Proteomics identification</keyword>
<keyword id="KW-1185">Reference proteome</keyword>
<keyword id="KW-0727">SH2 domain</keyword>
<keyword id="KW-0804">Transcription</keyword>
<keyword id="KW-0805">Transcription regulation</keyword>
<keyword id="KW-0832">Ubl conjugation</keyword>
<proteinExistence type="evidence at protein level"/>
<evidence type="ECO:0000250" key="1">
    <source>
        <dbReference type="UniProtKB" id="Q9WVL2"/>
    </source>
</evidence>
<evidence type="ECO:0000255" key="2">
    <source>
        <dbReference type="PROSITE-ProRule" id="PRU00191"/>
    </source>
</evidence>
<evidence type="ECO:0000269" key="3">
    <source>
    </source>
</evidence>
<evidence type="ECO:0000269" key="4">
    <source>
    </source>
</evidence>
<evidence type="ECO:0000269" key="5">
    <source>
    </source>
</evidence>
<evidence type="ECO:0000269" key="6">
    <source>
    </source>
</evidence>
<evidence type="ECO:0000269" key="7">
    <source>
    </source>
</evidence>
<evidence type="ECO:0000269" key="8">
    <source>
    </source>
</evidence>
<evidence type="ECO:0000269" key="9">
    <source>
    </source>
</evidence>
<evidence type="ECO:0000269" key="10">
    <source>
    </source>
</evidence>
<evidence type="ECO:0000269" key="11">
    <source>
    </source>
</evidence>
<evidence type="ECO:0000269" key="12">
    <source>
    </source>
</evidence>
<evidence type="ECO:0000269" key="13">
    <source>
    </source>
</evidence>
<evidence type="ECO:0000269" key="14">
    <source>
    </source>
</evidence>
<evidence type="ECO:0000269" key="15">
    <source>
    </source>
</evidence>
<evidence type="ECO:0000269" key="16">
    <source>
    </source>
</evidence>
<evidence type="ECO:0000269" key="17">
    <source>
    </source>
</evidence>
<evidence type="ECO:0000269" key="18">
    <source>
    </source>
</evidence>
<evidence type="ECO:0000269" key="19">
    <source>
    </source>
</evidence>
<evidence type="ECO:0000269" key="20">
    <source>
    </source>
</evidence>
<evidence type="ECO:0000269" key="21">
    <source>
    </source>
</evidence>
<evidence type="ECO:0000269" key="22">
    <source>
    </source>
</evidence>
<evidence type="ECO:0000269" key="23">
    <source>
    </source>
</evidence>
<evidence type="ECO:0000269" key="24">
    <source>
    </source>
</evidence>
<evidence type="ECO:0000269" key="25">
    <source>
    </source>
</evidence>
<evidence type="ECO:0000269" key="26">
    <source>
    </source>
</evidence>
<evidence type="ECO:0000269" key="27">
    <source>
    </source>
</evidence>
<evidence type="ECO:0000269" key="28">
    <source>
    </source>
</evidence>
<evidence type="ECO:0000269" key="29">
    <source>
    </source>
</evidence>
<evidence type="ECO:0000269" key="30">
    <source>
    </source>
</evidence>
<evidence type="ECO:0000269" key="31">
    <source>
    </source>
</evidence>
<evidence type="ECO:0000269" key="32">
    <source>
    </source>
</evidence>
<evidence type="ECO:0000269" key="33">
    <source ref="3"/>
</evidence>
<evidence type="ECO:0000303" key="34">
    <source>
    </source>
</evidence>
<evidence type="ECO:0000305" key="35"/>
<evidence type="ECO:0007744" key="36">
    <source>
    </source>
</evidence>
<evidence type="ECO:0007744" key="37">
    <source>
    </source>
</evidence>
<evidence type="ECO:0007829" key="38">
    <source>
        <dbReference type="PDB" id="2KA4"/>
    </source>
</evidence>
<evidence type="ECO:0007829" key="39">
    <source>
        <dbReference type="PDB" id="6UX2"/>
    </source>
</evidence>
<evidence type="ECO:0007829" key="40">
    <source>
        <dbReference type="PDB" id="8T12"/>
    </source>
</evidence>
<sequence length="851" mass="97916">MAQWEMLQNLDSPFQDQLHQLYSHSLLPVDIRQYLAVWIEDQNWQEAALGSDDSKATMLFFHFLDQLNYECGRCSQDPESLLLQHNLRKFCRDIQPFSQDPTQLAEMIFNLLLEEKRILIQAQRAQLEQGEPVLETPVESQQHEIESRILDLRAMMEKLVKSISQLKDQQDVFCFRYKIQAKGKTPSLDPHQTKEQKILQETLNELDKRRKEVLDASKALLGRLTTLIELLLPKLEEWKAQQQKACIRAPIDHGLEQLETWFTAGAKLLFHLRQLLKELKGLSCLVSYQDDPLTKGVDLRNAQVTELLQRLLHRAFVVETQPCMPQTPHRPLILKTGSKFTVRTRLLVRLQEGNESLTVEVSIDRNPPQLQGFRKFNILTSNQKTLTPEKGQSQGLIWDFGYLTLVEQRSGGSGKGSNKGPLGVTEELHIISFTVKYTYQGLKQELKTDTLPVVIISNMNQLSIAWASVLWFNLLSPNLQNQQFFSNPPKAPWSLLGPALSWQFSSYVGRGLNSDQLSMLRNKLFGQNCRTEDPLLSWADFTKRESPPGKLPFWTWLDKILELVHDHLKDLWNDGRIMGFVSRSQERRLLKKTMSGTFLLRFSESSEGGITCSWVEHQDDDKVLIYSVQPYTKEVLQSLPLTEIIRHYQLLTEENIPENPLRFLYPRIPRDEAFGCYYQEKVNLQERRKYLKHRLIVVSNRQVDELQQPLELKPEPELESLELELGLVPEPELSLDLEPLLKAGLDLGPELESVLESTLEPVIEPTLCMVSQTVPEPDQGPVSQPVPEPDLPCDLRHLNTEPMEIFRNCVKIEEIMPNGDPLLAGQNTVDEVYVSRPSHFYTDGPLMPSDF</sequence>
<reference key="1">
    <citation type="journal article" date="1992" name="Proc. Natl. Acad. Sci. U.S.A.">
        <title>The proteins of ISGF-3, the interferon alpha-induced transcriptional activator, define a gene family involved in signal transduction.</title>
        <authorList>
            <person name="Fu X.-Y."/>
            <person name="Schindler C."/>
            <person name="Improta T."/>
            <person name="Aebersold R."/>
            <person name="Darnell J.E. Jr."/>
        </authorList>
    </citation>
    <scope>NUCLEOTIDE SEQUENCE [MRNA] (ISOFORM 1)</scope>
    <scope>PARTIAL PROTEIN SEQUENCE</scope>
</reference>
<reference key="2">
    <citation type="journal article" date="1995" name="Nucleic Acids Res.">
        <title>The genomic structure of the STAT genes: multiple exons in coincident sites in Stat1 and Stat2.</title>
        <authorList>
            <person name="Yan R."/>
            <person name="Qureshi S."/>
            <person name="Zhong Z."/>
            <person name="Wen Z."/>
            <person name="Darnell J.E. Jr."/>
        </authorList>
    </citation>
    <scope>NUCLEOTIDE SEQUENCE [GENOMIC DNA]</scope>
</reference>
<reference key="3">
    <citation type="submission" date="2004-01" db="EMBL/GenBank/DDBJ databases">
        <authorList>
            <consortium name="NIEHS SNPs program"/>
        </authorList>
    </citation>
    <scope>NUCLEOTIDE SEQUENCE [GENOMIC DNA]</scope>
    <scope>VARIANTS MET-448; VAL-464; ILE-594 AND HIS-826</scope>
</reference>
<reference key="4">
    <citation type="journal article" date="2004" name="Nat. Genet.">
        <title>Complete sequencing and characterization of 21,243 full-length human cDNAs.</title>
        <authorList>
            <person name="Ota T."/>
            <person name="Suzuki Y."/>
            <person name="Nishikawa T."/>
            <person name="Otsuki T."/>
            <person name="Sugiyama T."/>
            <person name="Irie R."/>
            <person name="Wakamatsu A."/>
            <person name="Hayashi K."/>
            <person name="Sato H."/>
            <person name="Nagai K."/>
            <person name="Kimura K."/>
            <person name="Makita H."/>
            <person name="Sekine M."/>
            <person name="Obayashi M."/>
            <person name="Nishi T."/>
            <person name="Shibahara T."/>
            <person name="Tanaka T."/>
            <person name="Ishii S."/>
            <person name="Yamamoto J."/>
            <person name="Saito K."/>
            <person name="Kawai Y."/>
            <person name="Isono Y."/>
            <person name="Nakamura Y."/>
            <person name="Nagahari K."/>
            <person name="Murakami K."/>
            <person name="Yasuda T."/>
            <person name="Iwayanagi T."/>
            <person name="Wagatsuma M."/>
            <person name="Shiratori A."/>
            <person name="Sudo H."/>
            <person name="Hosoiri T."/>
            <person name="Kaku Y."/>
            <person name="Kodaira H."/>
            <person name="Kondo H."/>
            <person name="Sugawara M."/>
            <person name="Takahashi M."/>
            <person name="Kanda K."/>
            <person name="Yokoi T."/>
            <person name="Furuya T."/>
            <person name="Kikkawa E."/>
            <person name="Omura Y."/>
            <person name="Abe K."/>
            <person name="Kamihara K."/>
            <person name="Katsuta N."/>
            <person name="Sato K."/>
            <person name="Tanikawa M."/>
            <person name="Yamazaki M."/>
            <person name="Ninomiya K."/>
            <person name="Ishibashi T."/>
            <person name="Yamashita H."/>
            <person name="Murakawa K."/>
            <person name="Fujimori K."/>
            <person name="Tanai H."/>
            <person name="Kimata M."/>
            <person name="Watanabe M."/>
            <person name="Hiraoka S."/>
            <person name="Chiba Y."/>
            <person name="Ishida S."/>
            <person name="Ono Y."/>
            <person name="Takiguchi S."/>
            <person name="Watanabe S."/>
            <person name="Yosida M."/>
            <person name="Hotuta T."/>
            <person name="Kusano J."/>
            <person name="Kanehori K."/>
            <person name="Takahashi-Fujii A."/>
            <person name="Hara H."/>
            <person name="Tanase T.-O."/>
            <person name="Nomura Y."/>
            <person name="Togiya S."/>
            <person name="Komai F."/>
            <person name="Hara R."/>
            <person name="Takeuchi K."/>
            <person name="Arita M."/>
            <person name="Imose N."/>
            <person name="Musashino K."/>
            <person name="Yuuki H."/>
            <person name="Oshima A."/>
            <person name="Sasaki N."/>
            <person name="Aotsuka S."/>
            <person name="Yoshikawa Y."/>
            <person name="Matsunawa H."/>
            <person name="Ichihara T."/>
            <person name="Shiohata N."/>
            <person name="Sano S."/>
            <person name="Moriya S."/>
            <person name="Momiyama H."/>
            <person name="Satoh N."/>
            <person name="Takami S."/>
            <person name="Terashima Y."/>
            <person name="Suzuki O."/>
            <person name="Nakagawa S."/>
            <person name="Senoh A."/>
            <person name="Mizoguchi H."/>
            <person name="Goto Y."/>
            <person name="Shimizu F."/>
            <person name="Wakebe H."/>
            <person name="Hishigaki H."/>
            <person name="Watanabe T."/>
            <person name="Sugiyama A."/>
            <person name="Takemoto M."/>
            <person name="Kawakami B."/>
            <person name="Yamazaki M."/>
            <person name="Watanabe K."/>
            <person name="Kumagai A."/>
            <person name="Itakura S."/>
            <person name="Fukuzumi Y."/>
            <person name="Fujimori Y."/>
            <person name="Komiyama M."/>
            <person name="Tashiro H."/>
            <person name="Tanigami A."/>
            <person name="Fujiwara T."/>
            <person name="Ono T."/>
            <person name="Yamada K."/>
            <person name="Fujii Y."/>
            <person name="Ozaki K."/>
            <person name="Hirao M."/>
            <person name="Ohmori Y."/>
            <person name="Kawabata A."/>
            <person name="Hikiji T."/>
            <person name="Kobatake N."/>
            <person name="Inagaki H."/>
            <person name="Ikema Y."/>
            <person name="Okamoto S."/>
            <person name="Okitani R."/>
            <person name="Kawakami T."/>
            <person name="Noguchi S."/>
            <person name="Itoh T."/>
            <person name="Shigeta K."/>
            <person name="Senba T."/>
            <person name="Matsumura K."/>
            <person name="Nakajima Y."/>
            <person name="Mizuno T."/>
            <person name="Morinaga M."/>
            <person name="Sasaki M."/>
            <person name="Togashi T."/>
            <person name="Oyama M."/>
            <person name="Hata H."/>
            <person name="Watanabe M."/>
            <person name="Komatsu T."/>
            <person name="Mizushima-Sugano J."/>
            <person name="Satoh T."/>
            <person name="Shirai Y."/>
            <person name="Takahashi Y."/>
            <person name="Nakagawa K."/>
            <person name="Okumura K."/>
            <person name="Nagase T."/>
            <person name="Nomura N."/>
            <person name="Kikuchi H."/>
            <person name="Masuho Y."/>
            <person name="Yamashita R."/>
            <person name="Nakai K."/>
            <person name="Yada T."/>
            <person name="Nakamura Y."/>
            <person name="Ohara O."/>
            <person name="Isogai T."/>
            <person name="Sugano S."/>
        </authorList>
    </citation>
    <scope>NUCLEOTIDE SEQUENCE [LARGE SCALE MRNA] (ISOFORM 2)</scope>
    <source>
        <tissue>Tongue</tissue>
    </source>
</reference>
<reference key="5">
    <citation type="journal article" date="2006" name="Nature">
        <title>The finished DNA sequence of human chromosome 12.</title>
        <authorList>
            <person name="Scherer S.E."/>
            <person name="Muzny D.M."/>
            <person name="Buhay C.J."/>
            <person name="Chen R."/>
            <person name="Cree A."/>
            <person name="Ding Y."/>
            <person name="Dugan-Rocha S."/>
            <person name="Gill R."/>
            <person name="Gunaratne P."/>
            <person name="Harris R.A."/>
            <person name="Hawes A.C."/>
            <person name="Hernandez J."/>
            <person name="Hodgson A.V."/>
            <person name="Hume J."/>
            <person name="Jackson A."/>
            <person name="Khan Z.M."/>
            <person name="Kovar-Smith C."/>
            <person name="Lewis L.R."/>
            <person name="Lozado R.J."/>
            <person name="Metzker M.L."/>
            <person name="Milosavljevic A."/>
            <person name="Miner G.R."/>
            <person name="Montgomery K.T."/>
            <person name="Morgan M.B."/>
            <person name="Nazareth L.V."/>
            <person name="Scott G."/>
            <person name="Sodergren E."/>
            <person name="Song X.-Z."/>
            <person name="Steffen D."/>
            <person name="Lovering R.C."/>
            <person name="Wheeler D.A."/>
            <person name="Worley K.C."/>
            <person name="Yuan Y."/>
            <person name="Zhang Z."/>
            <person name="Adams C.Q."/>
            <person name="Ansari-Lari M.A."/>
            <person name="Ayele M."/>
            <person name="Brown M.J."/>
            <person name="Chen G."/>
            <person name="Chen Z."/>
            <person name="Clerc-Blankenburg K.P."/>
            <person name="Davis C."/>
            <person name="Delgado O."/>
            <person name="Dinh H.H."/>
            <person name="Draper H."/>
            <person name="Gonzalez-Garay M.L."/>
            <person name="Havlak P."/>
            <person name="Jackson L.R."/>
            <person name="Jacob L.S."/>
            <person name="Kelly S.H."/>
            <person name="Li L."/>
            <person name="Li Z."/>
            <person name="Liu J."/>
            <person name="Liu W."/>
            <person name="Lu J."/>
            <person name="Maheshwari M."/>
            <person name="Nguyen B.-V."/>
            <person name="Okwuonu G.O."/>
            <person name="Pasternak S."/>
            <person name="Perez L.M."/>
            <person name="Plopper F.J.H."/>
            <person name="Santibanez J."/>
            <person name="Shen H."/>
            <person name="Tabor P.E."/>
            <person name="Verduzco D."/>
            <person name="Waldron L."/>
            <person name="Wang Q."/>
            <person name="Williams G.A."/>
            <person name="Zhang J."/>
            <person name="Zhou J."/>
            <person name="Allen C.C."/>
            <person name="Amin A.G."/>
            <person name="Anyalebechi V."/>
            <person name="Bailey M."/>
            <person name="Barbaria J.A."/>
            <person name="Bimage K.E."/>
            <person name="Bryant N.P."/>
            <person name="Burch P.E."/>
            <person name="Burkett C.E."/>
            <person name="Burrell K.L."/>
            <person name="Calderon E."/>
            <person name="Cardenas V."/>
            <person name="Carter K."/>
            <person name="Casias K."/>
            <person name="Cavazos I."/>
            <person name="Cavazos S.R."/>
            <person name="Ceasar H."/>
            <person name="Chacko J."/>
            <person name="Chan S.N."/>
            <person name="Chavez D."/>
            <person name="Christopoulos C."/>
            <person name="Chu J."/>
            <person name="Cockrell R."/>
            <person name="Cox C.D."/>
            <person name="Dang M."/>
            <person name="Dathorne S.R."/>
            <person name="David R."/>
            <person name="Davis C.M."/>
            <person name="Davy-Carroll L."/>
            <person name="Deshazo D.R."/>
            <person name="Donlin J.E."/>
            <person name="D'Souza L."/>
            <person name="Eaves K.A."/>
            <person name="Egan A."/>
            <person name="Emery-Cohen A.J."/>
            <person name="Escotto M."/>
            <person name="Flagg N."/>
            <person name="Forbes L.D."/>
            <person name="Gabisi A.M."/>
            <person name="Garza M."/>
            <person name="Hamilton C."/>
            <person name="Henderson N."/>
            <person name="Hernandez O."/>
            <person name="Hines S."/>
            <person name="Hogues M.E."/>
            <person name="Huang M."/>
            <person name="Idlebird D.G."/>
            <person name="Johnson R."/>
            <person name="Jolivet A."/>
            <person name="Jones S."/>
            <person name="Kagan R."/>
            <person name="King L.M."/>
            <person name="Leal B."/>
            <person name="Lebow H."/>
            <person name="Lee S."/>
            <person name="LeVan J.M."/>
            <person name="Lewis L.C."/>
            <person name="London P."/>
            <person name="Lorensuhewa L.M."/>
            <person name="Loulseged H."/>
            <person name="Lovett D.A."/>
            <person name="Lucier A."/>
            <person name="Lucier R.L."/>
            <person name="Ma J."/>
            <person name="Madu R.C."/>
            <person name="Mapua P."/>
            <person name="Martindale A.D."/>
            <person name="Martinez E."/>
            <person name="Massey E."/>
            <person name="Mawhiney S."/>
            <person name="Meador M.G."/>
            <person name="Mendez S."/>
            <person name="Mercado C."/>
            <person name="Mercado I.C."/>
            <person name="Merritt C.E."/>
            <person name="Miner Z.L."/>
            <person name="Minja E."/>
            <person name="Mitchell T."/>
            <person name="Mohabbat F."/>
            <person name="Mohabbat K."/>
            <person name="Montgomery B."/>
            <person name="Moore N."/>
            <person name="Morris S."/>
            <person name="Munidasa M."/>
            <person name="Ngo R.N."/>
            <person name="Nguyen N.B."/>
            <person name="Nickerson E."/>
            <person name="Nwaokelemeh O.O."/>
            <person name="Nwokenkwo S."/>
            <person name="Obregon M."/>
            <person name="Oguh M."/>
            <person name="Oragunye N."/>
            <person name="Oviedo R.J."/>
            <person name="Parish B.J."/>
            <person name="Parker D.N."/>
            <person name="Parrish J."/>
            <person name="Parks K.L."/>
            <person name="Paul H.A."/>
            <person name="Payton B.A."/>
            <person name="Perez A."/>
            <person name="Perrin W."/>
            <person name="Pickens A."/>
            <person name="Primus E.L."/>
            <person name="Pu L.-L."/>
            <person name="Puazo M."/>
            <person name="Quiles M.M."/>
            <person name="Quiroz J.B."/>
            <person name="Rabata D."/>
            <person name="Reeves K."/>
            <person name="Ruiz S.J."/>
            <person name="Shao H."/>
            <person name="Sisson I."/>
            <person name="Sonaike T."/>
            <person name="Sorelle R.P."/>
            <person name="Sutton A.E."/>
            <person name="Svatek A.F."/>
            <person name="Svetz L.A."/>
            <person name="Tamerisa K.S."/>
            <person name="Taylor T.R."/>
            <person name="Teague B."/>
            <person name="Thomas N."/>
            <person name="Thorn R.D."/>
            <person name="Trejos Z.Y."/>
            <person name="Trevino B.K."/>
            <person name="Ukegbu O.N."/>
            <person name="Urban J.B."/>
            <person name="Vasquez L.I."/>
            <person name="Vera V.A."/>
            <person name="Villasana D.M."/>
            <person name="Wang L."/>
            <person name="Ward-Moore S."/>
            <person name="Warren J.T."/>
            <person name="Wei X."/>
            <person name="White F."/>
            <person name="Williamson A.L."/>
            <person name="Wleczyk R."/>
            <person name="Wooden H.S."/>
            <person name="Wooden S.H."/>
            <person name="Yen J."/>
            <person name="Yoon L."/>
            <person name="Yoon V."/>
            <person name="Zorrilla S.E."/>
            <person name="Nelson D."/>
            <person name="Kucherlapati R."/>
            <person name="Weinstock G."/>
            <person name="Gibbs R.A."/>
        </authorList>
    </citation>
    <scope>NUCLEOTIDE SEQUENCE [LARGE SCALE GENOMIC DNA]</scope>
</reference>
<reference key="6">
    <citation type="journal article" date="2004" name="Genome Res.">
        <title>The status, quality, and expansion of the NIH full-length cDNA project: the Mammalian Gene Collection (MGC).</title>
        <authorList>
            <consortium name="The MGC Project Team"/>
        </authorList>
    </citation>
    <scope>NUCLEOTIDE SEQUENCE [LARGE SCALE MRNA] (ISOFORM 1)</scope>
    <source>
        <tissue>Lung</tissue>
    </source>
</reference>
<reference key="7">
    <citation type="journal article" date="1992" name="Cell">
        <title>A transcription factor with SH2 and SH3 domains is directly activated by an interferon alpha-induced cytoplasmic protein tyrosine kinase(s).</title>
        <authorList>
            <person name="Fu X.Y."/>
        </authorList>
    </citation>
    <scope>PHOSPHORYLATION IN RESPONSE TO IFN-ALPHA</scope>
</reference>
<reference key="8">
    <citation type="journal article" date="1995" name="Mol. Cell. Biol.">
        <title>Role of STAT2 in the alpha interferon signaling pathway.</title>
        <authorList>
            <person name="Leung S."/>
            <person name="Qureshi S.A."/>
            <person name="Kerr I.M."/>
            <person name="Darnell J.E. Jr."/>
            <person name="Stark G.R."/>
        </authorList>
    </citation>
    <scope>PHOSPHORYLATION AT TYR-690</scope>
    <scope>MUTAGENESIS OF TYR-690</scope>
</reference>
<reference key="9">
    <citation type="journal article" date="1996" name="FEBS Lett.">
        <title>Identification of alternative splicing form of Stat2.</title>
        <authorList>
            <person name="Sugiyama T."/>
            <person name="Nishio Y."/>
            <person name="Kishimoto T."/>
            <person name="Akira S."/>
        </authorList>
    </citation>
    <scope>POTENTIAL ALTERNATIVE SPLICING</scope>
</reference>
<reference key="10">
    <citation type="journal article" date="1997" name="J. Biol. Chem.">
        <title>Stat2 is a transcriptional activator that requires sequence-specific contacts provided by stat1 and p48 for stable interaction with DNA.</title>
        <authorList>
            <person name="Bluyssen H.A."/>
            <person name="Levy D.E."/>
        </authorList>
    </citation>
    <scope>FUNCTION</scope>
    <scope>SUBUNIT</scope>
</reference>
<reference key="11">
    <citation type="journal article" date="1997" name="Mol. Cell. Biol.">
        <title>Functional subdomains of STAT2 required for preassociation with the alpha interferon receptor and for signaling.</title>
        <authorList>
            <person name="Li X."/>
            <person name="Leung S."/>
            <person name="Kerr I.M."/>
            <person name="Stark G.R."/>
        </authorList>
    </citation>
    <scope>INTERACTION WITH IFNAR1 AND IFNAR2</scope>
    <scope>PHOSPHORYLATION AT TYR-690</scope>
</reference>
<reference key="12">
    <citation type="journal article" date="1999" name="Intervirology">
        <title>Viral inhibition of interferon signal transduction.</title>
        <authorList>
            <person name="Cebulla C.M."/>
            <person name="Miller D.M."/>
            <person name="Sedmak D.D."/>
        </authorList>
    </citation>
    <scope>REVIEW</scope>
</reference>
<reference key="13">
    <citation type="journal article" date="2001" name="J. Biol. Chem.">
        <title>Arginine/lysine-rich structural element is involved in interferon-induced nuclear import of STATs.</title>
        <authorList>
            <person name="Melen K."/>
            <person name="Kinnunen L."/>
            <person name="Julkunen I."/>
        </authorList>
    </citation>
    <scope>SUBCELLULAR LOCATION</scope>
    <scope>MUTAGENESIS OF ARG-374; LYS-375; ARG-409 AND LYS-415</scope>
</reference>
<reference key="14">
    <citation type="journal article" date="2003" name="Mol. Cell. Biol.">
        <title>Role of metazoan mediator proteins in interferon-responsive transcription.</title>
        <authorList>
            <person name="Lau J.F."/>
            <person name="Nusinzon I."/>
            <person name="Burakov D."/>
            <person name="Freedman L.P."/>
            <person name="Horvath C.M."/>
        </authorList>
    </citation>
    <scope>INTERACTION WITH CRSP2 AND CRSP6</scope>
</reference>
<reference key="15">
    <citation type="journal article" date="2005" name="J. Virol.">
        <title>Simian virus 5 V protein acts as an adaptor, linking DDB1 to STAT2, to facilitate the ubiquitination of STAT1.</title>
        <authorList>
            <person name="Precious B."/>
            <person name="Childs K."/>
            <person name="Fitzpatrick-Swallow V."/>
            <person name="Goodbourn S."/>
            <person name="Randall R.E."/>
        </authorList>
    </citation>
    <scope>INTERACTION WITH SIMIAN VIRUS 5 PROTEIN V (MICROBIAL INFECTION)</scope>
</reference>
<reference key="16">
    <citation type="journal article" date="2008" name="J. Virol.">
        <title>STAT2 is a primary target for measles virus V protein-mediated alpha/beta interferon signaling inhibition.</title>
        <authorList>
            <person name="Ramachandran A."/>
            <person name="Parisien J.P."/>
            <person name="Horvath C.M."/>
        </authorList>
    </citation>
    <scope>INTERACTION WITH MEASLES VIRUS V PROTEIN (MICROBIAL INFECTION)</scope>
</reference>
<reference key="17">
    <citation type="journal article" date="2008" name="J. Virol.">
        <title>Binding STAT2 by the acidic domain of human cytomegalovirus IE1 promotes viral growth and is negatively regulated by SUMO.</title>
        <authorList>
            <person name="Huh Y.H."/>
            <person name="Kim Y.E."/>
            <person name="Kim E.T."/>
            <person name="Park J.J."/>
            <person name="Song M.J."/>
            <person name="Zhu H."/>
            <person name="Hayward G.S."/>
            <person name="Ahn J.H."/>
        </authorList>
    </citation>
    <scope>INTERACTION WITH HHV-5 IMMEDIATE EARLY PROTEIN IE1 (MICROBIAL INFECTION)</scope>
</reference>
<reference key="18">
    <citation type="journal article" date="2009" name="J. Virol.">
        <title>Physical requirements and functional consequences of complex formation between the cytomegalovirus IE1 protein and human STAT2.</title>
        <authorList>
            <person name="Krauss S."/>
            <person name="Kaps J."/>
            <person name="Czech N."/>
            <person name="Paulus C."/>
            <person name="Nevels M."/>
        </authorList>
    </citation>
    <scope>INTERACTION WITH HHV-5 IMMEDIATE EARLY PROTEIN IE1 (MICROBIAL INFECTION)</scope>
</reference>
<reference key="19">
    <citation type="journal article" date="2009" name="J. Virol.">
        <title>NS5 of dengue virus mediates STAT2 binding and degradation.</title>
        <authorList>
            <person name="Ashour J."/>
            <person name="Laurent-Rolle M."/>
            <person name="Shi P.Y."/>
            <person name="Garcia-Sastre A."/>
        </authorList>
    </citation>
    <scope>INTERACTION WITH DENGUE VIRUS NS5 (MICROBIAL INFECTION)</scope>
</reference>
<reference key="20">
    <citation type="journal article" date="2009" name="J. Infect. Dis.">
        <title>Dengue virus NS5 inhibits interferon-alpha signaling by blocking signal transducer and activator of transcription 2 phosphorylation.</title>
        <authorList>
            <person name="Mazzon M."/>
            <person name="Jones M."/>
            <person name="Davidson A."/>
            <person name="Chain B."/>
            <person name="Jacobs M."/>
        </authorList>
    </citation>
    <scope>INTERACTION WITH DENGUE VIRUS NS5 (MICROBIAL INFECTION)</scope>
</reference>
<reference key="21">
    <citation type="journal article" date="2009" name="Virology">
        <title>Inhibition of IFN-alpha/beta signaling by two discrete peptides within measles virus V protein that specifically bind STAT1 and STAT2.</title>
        <authorList>
            <consortium name="Infection-MAPping project I-MAP"/>
            <person name="Caignard G."/>
            <person name="Bourai M."/>
            <person name="Jacob Y."/>
            <person name="Tangy F."/>
            <person name="Vidalain P.O."/>
        </authorList>
    </citation>
    <scope>INTERACTION WITH MEASLES VIRUS V PROTEIN (MICROBIAL INFECTION)</scope>
</reference>
<reference key="22">
    <citation type="journal article" date="2011" name="BMC Syst. Biol.">
        <title>Initial characterization of the human central proteome.</title>
        <authorList>
            <person name="Burkard T.R."/>
            <person name="Planyavsky M."/>
            <person name="Kaupe I."/>
            <person name="Breitwieser F.P."/>
            <person name="Buerckstuemmer T."/>
            <person name="Bennett K.L."/>
            <person name="Superti-Furga G."/>
            <person name="Colinge J."/>
        </authorList>
    </citation>
    <scope>IDENTIFICATION BY MASS SPECTROMETRY [LARGE SCALE ANALYSIS]</scope>
</reference>
<reference key="23">
    <citation type="journal article" date="2011" name="PLoS Pathog.">
        <title>Vaccinia virus protein C6 is a virulence factor that binds TBK-1 adaptor proteins and inhibits activation of IRF3 and IRF7.</title>
        <authorList>
            <person name="Unterholzner L."/>
            <person name="Sumner R.P."/>
            <person name="Baran M."/>
            <person name="Ren H."/>
            <person name="Mansur D.S."/>
            <person name="Bourke N.M."/>
            <person name="Randow F."/>
            <person name="Smith G.L."/>
            <person name="Bowie A.G."/>
        </authorList>
    </citation>
    <scope>INTERACTION WITH VACCINIA VIRUS PROTEIN C6 (MICROBIAL INFECTION)</scope>
</reference>
<reference key="24">
    <citation type="journal article" date="2013" name="J. Biol. Chem.">
        <title>Identification of STAT2 serine 287 as a novel regulatory phosphorylation site in type I interferon-induced cellular responses.</title>
        <authorList>
            <person name="Steen H.C."/>
            <person name="Nogusa S."/>
            <person name="Thapa R.J."/>
            <person name="Basagoudanavar S.H."/>
            <person name="Gill A.L."/>
            <person name="Merali S."/>
            <person name="Barrero C.A."/>
            <person name="Balachandran S."/>
            <person name="Gamero A.M."/>
        </authorList>
    </citation>
    <scope>PHOSPHORYLATION AT SER-283; SER-287 AND THR-294</scope>
    <scope>SUBCELLULAR LOCATION</scope>
</reference>
<reference key="25">
    <citation type="journal article" date="2013" name="J. Proteome Res.">
        <title>Toward a comprehensive characterization of a human cancer cell phosphoproteome.</title>
        <authorList>
            <person name="Zhou H."/>
            <person name="Di Palma S."/>
            <person name="Preisinger C."/>
            <person name="Peng M."/>
            <person name="Polat A.N."/>
            <person name="Heck A.J."/>
            <person name="Mohammed S."/>
        </authorList>
    </citation>
    <scope>PHOSPHORYLATION [LARGE SCALE ANALYSIS] AT THR-800</scope>
    <scope>IDENTIFICATION BY MASS SPECTROMETRY [LARGE SCALE ANALYSIS]</scope>
    <source>
        <tissue>Erythroleukemia</tissue>
    </source>
</reference>
<reference key="26">
    <citation type="journal article" date="2013" name="Proc. Natl. Acad. Sci. U.S.A.">
        <title>STAT2 deficiency and susceptibility to viral illness in humans.</title>
        <authorList>
            <person name="Hambleton S."/>
            <person name="Goodbourn S."/>
            <person name="Young D.F."/>
            <person name="Dickinson P."/>
            <person name="Mohamad S.M."/>
            <person name="Valappil M."/>
            <person name="McGovern N."/>
            <person name="Cant A.J."/>
            <person name="Hackett S.J."/>
            <person name="Ghazal P."/>
            <person name="Morgan N.V."/>
            <person name="Randall R.E."/>
        </authorList>
    </citation>
    <scope>INVOLVEMENT IN IMD44</scope>
    <scope>FUNCTION</scope>
</reference>
<reference key="27">
    <citation type="journal article" date="2014" name="J. Proteomics">
        <title>An enzyme assisted RP-RPLC approach for in-depth analysis of human liver phosphoproteome.</title>
        <authorList>
            <person name="Bian Y."/>
            <person name="Song C."/>
            <person name="Cheng K."/>
            <person name="Dong M."/>
            <person name="Wang F."/>
            <person name="Huang J."/>
            <person name="Sun D."/>
            <person name="Wang L."/>
            <person name="Ye M."/>
            <person name="Zou H."/>
        </authorList>
    </citation>
    <scope>PHOSPHORYLATION [LARGE SCALE ANALYSIS] AT SER-753 AND THR-800</scope>
    <scope>IDENTIFICATION BY MASS SPECTROMETRY [LARGE SCALE ANALYSIS]</scope>
    <source>
        <tissue>Liver</tissue>
    </source>
</reference>
<reference key="28">
    <citation type="journal article" date="2015" name="Brain">
        <title>Signal transducer and activator of transcription 2 deficiency is a novel disorder of mitochondrial fission.</title>
        <authorList>
            <person name="Shahni R."/>
            <person name="Cale C.M."/>
            <person name="Anderson G."/>
            <person name="Osellame L.D."/>
            <person name="Hambleton S."/>
            <person name="Jacques T.S."/>
            <person name="Wedatilake Y."/>
            <person name="Taanman J.W."/>
            <person name="Chan E."/>
            <person name="Qasim W."/>
            <person name="Plagnol V."/>
            <person name="Chalasani A."/>
            <person name="Duchen M.R."/>
            <person name="Gilmour K.C."/>
            <person name="Rahman S."/>
        </authorList>
    </citation>
    <scope>INVOLVEMENT IN IMD44</scope>
    <scope>FUNCTION</scope>
</reference>
<reference key="29">
    <citation type="journal article" date="2015" name="J. Virol.">
        <title>Disruption of type I interferon signaling by the nonstructural protein of severe fever with thrombocytopenia syndrome virus via the hijacking of STAT2 and STAT1 into inclusion bodies.</title>
        <authorList>
            <person name="Ning Y.J."/>
            <person name="Feng K."/>
            <person name="Min Y.Q."/>
            <person name="Cao W.C."/>
            <person name="Wang M."/>
            <person name="Deng F."/>
            <person name="Hu Z."/>
            <person name="Wang H."/>
        </authorList>
    </citation>
    <scope>INTERACTION WITH SFTSV VIRUS NSS (MICROBIAL INFECTION)</scope>
</reference>
<reference key="30">
    <citation type="journal article" date="2016" name="Sci. Rep.">
        <title>Global functional profiling of human ubiquitome identifies E3 ubiquitin ligase DCST1 as a novel negative regulator of Type-I interferon signaling.</title>
        <authorList>
            <person name="Nair S."/>
            <person name="Bist P."/>
            <person name="Dikshit N."/>
            <person name="Krishnan M.N."/>
        </authorList>
    </citation>
    <scope>INTERACTION WITH DCST1</scope>
    <scope>SUBCELLULAR LOCATION</scope>
    <scope>UBIQUITINATION</scope>
</reference>
<reference key="31">
    <citation type="journal article" date="2016" name="EMBO Rep.">
        <title>Zika virus inhibits type-I interferon production and downstream signaling.</title>
        <authorList>
            <person name="Kumar A."/>
            <person name="Hou S."/>
            <person name="Airo A.M."/>
            <person name="Limonta D."/>
            <person name="Mancinelli V."/>
            <person name="Branton W."/>
            <person name="Power C."/>
            <person name="Hobman T.C."/>
        </authorList>
    </citation>
    <scope>INTERACTION WITH ZIKA VIRUS PROTEIN NS5 (MICROBIAL INFECTION)</scope>
</reference>
<reference key="32">
    <citation type="journal article" date="2016" name="Cell Host Microbe">
        <title>Zika Virus Targets Human STAT2 to Inhibit Type I Interferon Signaling.</title>
        <authorList>
            <person name="Grant A."/>
            <person name="Ponia S.S."/>
            <person name="Tripathi S."/>
            <person name="Balasubramaniam V."/>
            <person name="Miorin L."/>
            <person name="Sourisseau M."/>
            <person name="Schwarz M.C."/>
            <person name="Sanchez-Seco M.P."/>
            <person name="Evans M.J."/>
            <person name="Best S.M."/>
            <person name="Garcia-Sastre A."/>
        </authorList>
    </citation>
    <scope>INTERACTION WITH ZIKA VIRUS PROTEIN NS5 (MICROBIAL INFECTION)</scope>
</reference>
<reference key="33">
    <citation type="journal article" date="2017" name="Nat. Struct. Mol. Biol.">
        <title>STAT2 is an essential adaptor in USP18-mediated suppression of type I interferon signaling.</title>
        <authorList>
            <person name="Arimoto K.I."/>
            <person name="Loechte S."/>
            <person name="Stoner S.A."/>
            <person name="Burkart C."/>
            <person name="Zhang Y."/>
            <person name="Miyauchi S."/>
            <person name="Wilmes S."/>
            <person name="Fan J.B."/>
            <person name="Heinisch J.J."/>
            <person name="Li Z."/>
            <person name="Yan M."/>
            <person name="Pellegrini S."/>
            <person name="Colland F."/>
            <person name="Piehler J."/>
            <person name="Zhang D.E."/>
        </authorList>
    </citation>
    <scope>FUNCTION</scope>
    <scope>INTERACTION WITH IFNAR2 AND USP18</scope>
    <scope>REGION</scope>
</reference>
<reference key="34">
    <citation type="journal article" date="2018" name="Microbes Infect.">
        <title>Nonstructural protein of severe fever with thrombocytopenia syndrome phlebovirus targets STAT2 and not STAT1 to inhibit type I interferon-stimulated JAK-STAT signaling.</title>
        <authorList>
            <person name="Kitagawa Y."/>
            <person name="Sakai M."/>
            <person name="Shimojima M."/>
            <person name="Saijo M."/>
            <person name="Itoh M."/>
            <person name="Gotoh B."/>
        </authorList>
    </citation>
    <scope>INTERACTION WITH SFTSV VIRUS NSS (MICROBIAL INFECTION)</scope>
</reference>
<reference key="35">
    <citation type="journal article" date="2019" name="J. Virol.">
        <title>Species-Specific Pathogenicity of Severe Fever with Thrombocytopenia Syndrome Virus Is Determined by Anti-STAT2 Activity of NSs.</title>
        <authorList>
            <person name="Yoshikawa R."/>
            <person name="Sakabe S."/>
            <person name="Urata S."/>
            <person name="Yasuda J."/>
        </authorList>
    </citation>
    <scope>INTERACTION WITH SFTSV VIRUS NSS (MICROBIAL INFECTION)</scope>
</reference>
<reference key="36">
    <citation type="journal article" date="2019" name="J. Biol. Chem.">
        <title>Heartland virus antagonizes type I and III interferon antiviral signaling by inhibiting phosphorylation and nuclear translocation of STAT2 and STAT1.</title>
        <authorList>
            <person name="Feng K."/>
            <person name="Deng F."/>
            <person name="Hu Z."/>
            <person name="Wang H."/>
            <person name="Ning Y.J."/>
        </authorList>
    </citation>
    <scope>INTERACTION WITH HEARTLAND VIRUS NSS (MICROBIAL INFECTION)</scope>
</reference>
<reference key="37">
    <citation type="journal article" date="2020" name="J. Immunol.">
        <title>Herpes Simplex Virus Type 2 Inhibits Type I IFN Signaling Mediated by the Novel E3 Ubiquitin Protein Ligase Activity of Viral Protein ICP22.</title>
        <authorList>
            <person name="Zhang M."/>
            <person name="Fu M."/>
            <person name="Li M."/>
            <person name="Hu H."/>
            <person name="Gong S."/>
            <person name="Hu Q."/>
        </authorList>
    </citation>
    <scope>UBIQUITINATION BY HERPES SIMPLEX VIRUS 2 PROTEIN ICP22 (MICROBIAL INFECTION)</scope>
</reference>
<reference key="38">
    <citation type="journal article" date="2020" name="J. Virol.">
        <title>The Measles Virus V Protein Binding Site to STAT2 Overlaps That of IRF9.</title>
        <authorList>
            <person name="Nagano Y."/>
            <person name="Sugiyama A."/>
            <person name="Kimoto M."/>
            <person name="Wakahara T."/>
            <person name="Noguchi Y."/>
            <person name="Jiang X."/>
            <person name="Saijo S."/>
            <person name="Shimizu N."/>
            <person name="Yabuno N."/>
            <person name="Yao M."/>
            <person name="Gooley P.R."/>
            <person name="Moseley G.W."/>
            <person name="Tadokoro T."/>
            <person name="Maenaka K."/>
            <person name="Ose T."/>
        </authorList>
    </citation>
    <scope>INTERACTION WITH MEASLES VIRUS V PROTEIN (MICROBIAL INFECTION)</scope>
</reference>
<reference key="39">
    <citation type="journal article" date="2021" name="J. Virol.">
        <title>Suppression of JAK-STAT Signaling by Epstein-Barr Virus Tegument Protein BGLF2 through Recruitment of SHP1 Phosphatase and Promotion of STAT2 Degradation.</title>
        <authorList>
            <person name="Jangra S."/>
            <person name="Bharti A."/>
            <person name="Lui W.Y."/>
            <person name="Chaudhary V."/>
            <person name="Botelho M.G."/>
            <person name="Yuen K.S."/>
            <person name="Jin D.Y."/>
        </authorList>
    </citation>
    <scope>INTERACTION WITH EPSTEIN-BARR VIRUS TEGUMENT PROTEIN BGLF2 (MICROBIAL INFECTION)</scope>
</reference>
<reference key="40">
    <citation type="journal article" date="2019" name="Sci. Immunol.">
        <title>Severe type I interferonopathy and unrestrained interferon signaling due to a homozygous germline mutation in STAT2.</title>
        <authorList>
            <person name="Duncan C.J.A."/>
            <person name="Thompson B.J."/>
            <person name="Chen R."/>
            <person name="Rice G.I."/>
            <person name="Gothe F."/>
            <person name="Young D.F."/>
            <person name="Lovell S.C."/>
            <person name="Shuttleworth V.G."/>
            <person name="Brocklebank V."/>
            <person name="Corner B."/>
            <person name="Skelton A.J."/>
            <person name="Bondet V."/>
            <person name="Coxhead J."/>
            <person name="Duffy D."/>
            <person name="Fourrage C."/>
            <person name="Livingston J.H."/>
            <person name="Pavaine J."/>
            <person name="Cheesman E."/>
            <person name="Bitetti S."/>
            <person name="Grainger A."/>
            <person name="Acres M."/>
            <person name="Innes B.A."/>
            <person name="Mikulasova A."/>
            <person name="Sun R."/>
            <person name="Hussain R."/>
            <person name="Wright R."/>
            <person name="Wynn R."/>
            <person name="Zarhrate M."/>
            <person name="Zeef L.A.H."/>
            <person name="Wood K."/>
            <person name="Hughes S.M."/>
            <person name="Harris C.L."/>
            <person name="Engelhardt K.R."/>
            <person name="Crow Y.J."/>
            <person name="Randall R.E."/>
            <person name="Kavanagh D."/>
            <person name="Hambleton S."/>
            <person name="Briggs T.A."/>
        </authorList>
    </citation>
    <scope>INVOLVEMENT IN PTORCH3</scope>
    <scope>VARIANT PTORCH3 TRP-148</scope>
    <scope>CHARACTERIZATION OF VARIANT PTORCH3 TRP-148</scope>
    <scope>FUNCTION</scope>
    <scope>INTERACTION WITH USP18</scope>
</reference>
<reference key="41">
    <citation type="journal article" date="2020" name="J. Exp. Med.">
        <title>Homozygous STAT2 gain-of-function mutation by loss of USP18 activity in a patient with type I interferonopathy.</title>
        <authorList>
            <person name="Gruber C."/>
            <person name="Martin-Fernandez M."/>
            <person name="Ailal F."/>
            <person name="Qiu X."/>
            <person name="Taft J."/>
            <person name="Altman J."/>
            <person name="Rosain J."/>
            <person name="Buta S."/>
            <person name="Bousfiha A."/>
            <person name="Casanova J.L."/>
            <person name="Bustamante J."/>
            <person name="Bogunovic D."/>
        </authorList>
    </citation>
    <scope>VARIANT PTORCH3 GLN-148</scope>
    <scope>CHARACTERIZATION OF VARIANT PTORCH3 GLN-148</scope>
    <scope>FUNCTION</scope>
    <scope>INTERACTION WITH USP18</scope>
</reference>